<geneLocation type="plasmid">
    <name>F</name>
</geneLocation>
<evidence type="ECO:0000305" key="1"/>
<organism>
    <name type="scientific">Escherichia coli (strain K12)</name>
    <dbReference type="NCBI Taxonomy" id="83333"/>
    <lineage>
        <taxon>Bacteria</taxon>
        <taxon>Pseudomonadati</taxon>
        <taxon>Pseudomonadota</taxon>
        <taxon>Gammaproteobacteria</taxon>
        <taxon>Enterobacterales</taxon>
        <taxon>Enterobacteriaceae</taxon>
        <taxon>Escherichia</taxon>
    </lineage>
</organism>
<accession>P08322</accession>
<protein>
    <recommendedName>
        <fullName>Protein TraE</fullName>
    </recommendedName>
</protein>
<name>TRAE1_ECOLI</name>
<sequence>MEHGARLSTSRVMAIAFIFMSVLIVLSLSVNVIQGVNNYRLQNEQRTAVTPMAFNAPFAVSQNSADASYLQQMALSFIALRLNVSSETVDASHQALLQYIRPGAQNQMKVILAEEAKRIKNDNVNSAFFQTSVRVWPQYGRVEIRGVLKTWIGDSKPFTDIKHYILILKRENGVTWLDNFGETDDEKK</sequence>
<comment type="function">
    <text>Involved in F pilus assembly.</text>
</comment>
<comment type="similarity">
    <text evidence="1">Belongs to the TraE family.</text>
</comment>
<dbReference type="EMBL" id="K01147">
    <property type="protein sequence ID" value="AAA24912.1"/>
    <property type="molecule type" value="Genomic_DNA"/>
</dbReference>
<dbReference type="EMBL" id="U01159">
    <property type="protein sequence ID" value="AAC44182.1"/>
    <property type="molecule type" value="Genomic_DNA"/>
</dbReference>
<dbReference type="EMBL" id="AP001918">
    <property type="protein sequence ID" value="BAA97946.1"/>
    <property type="molecule type" value="Genomic_DNA"/>
</dbReference>
<dbReference type="PIR" id="C29332">
    <property type="entry name" value="BVECTE"/>
</dbReference>
<dbReference type="RefSeq" id="NP_061455.1">
    <property type="nucleotide sequence ID" value="NC_002483.1"/>
</dbReference>
<dbReference type="RefSeq" id="WP_000399792.1">
    <property type="nucleotide sequence ID" value="NZ_SSZK01000064.1"/>
</dbReference>
<dbReference type="SMR" id="P08322"/>
<dbReference type="GeneID" id="75203836"/>
<dbReference type="KEGG" id="ecoc:C3026_24485"/>
<dbReference type="PATRIC" id="fig|83333.107.peg.637"/>
<dbReference type="OrthoDB" id="5880202at2"/>
<dbReference type="PRO" id="PR:P08322"/>
<dbReference type="InterPro" id="IPR007973">
    <property type="entry name" value="Pilus_assembly_TraE"/>
</dbReference>
<dbReference type="NCBIfam" id="TIGR02761">
    <property type="entry name" value="TraE_TIGR"/>
    <property type="match status" value="1"/>
</dbReference>
<dbReference type="Pfam" id="PF05309">
    <property type="entry name" value="TraE"/>
    <property type="match status" value="1"/>
</dbReference>
<keyword id="KW-0184">Conjugation</keyword>
<keyword id="KW-0614">Plasmid</keyword>
<proteinExistence type="inferred from homology"/>
<reference key="1">
    <citation type="journal article" date="1984" name="J. Bacteriol.">
        <title>DNA sequence of the F traALE region that includes the gene for F pilin.</title>
        <authorList>
            <person name="Frost L.S."/>
            <person name="Paranchych W."/>
            <person name="Willetts N.S."/>
        </authorList>
    </citation>
    <scope>NUCLEOTIDE SEQUENCE [GENOMIC DNA]</scope>
    <source>
        <strain>K12</strain>
    </source>
</reference>
<reference key="2">
    <citation type="journal article" date="1994" name="Microbiol. Rev.">
        <title>Analysis of the sequence and gene products of the transfer region of the F sex factor.</title>
        <authorList>
            <person name="Frost L.S."/>
            <person name="Ippen-Ihler K."/>
            <person name="Skurray R.A."/>
        </authorList>
    </citation>
    <scope>NUCLEOTIDE SEQUENCE [GENOMIC DNA]</scope>
</reference>
<reference key="3">
    <citation type="submission" date="2000-04" db="EMBL/GenBank/DDBJ databases">
        <title>Complete nucleotide sequence of the F plasmid: its implications for organization and diversification of plasmid genomes.</title>
        <authorList>
            <person name="Shimizu H."/>
            <person name="Saitoh Y."/>
            <person name="Suda Y."/>
            <person name="Uehara K."/>
            <person name="Sampei G."/>
            <person name="Mizobuchi K."/>
        </authorList>
    </citation>
    <scope>NUCLEOTIDE SEQUENCE [LARGE SCALE GENOMIC DNA]</scope>
    <source>
        <strain>K12 / CR63</strain>
    </source>
</reference>
<feature type="chain" id="PRO_0000068450" description="Protein TraE">
    <location>
        <begin position="1"/>
        <end position="188"/>
    </location>
</feature>
<feature type="sequence conflict" description="In Ref. 1; AAA24912." evidence="1" ref="1">
    <original>AQN</original>
    <variation>RTD</variation>
    <location>
        <begin position="104"/>
        <end position="106"/>
    </location>
</feature>
<feature type="sequence conflict" description="In Ref. 1 and 2." evidence="1" ref="1 2">
    <original>WPQYGRVEI</original>
    <variation>CLSMAVWKF</variation>
    <location>
        <begin position="136"/>
        <end position="144"/>
    </location>
</feature>
<gene>
    <name type="primary">traE</name>
    <name type="ordered locus">ECOK12F076</name>
</gene>